<comment type="function">
    <text evidence="1">Specifically methylates position 2 of adenine 2503 in 23S rRNA and position 2 of adenine 37 in tRNAs. m2A2503 modification seems to play a crucial role in the proofreading step occurring at the peptidyl transferase center and thus would serve to optimize ribosomal fidelity.</text>
</comment>
<comment type="catalytic activity">
    <reaction evidence="1">
        <text>adenosine(2503) in 23S rRNA + 2 reduced [2Fe-2S]-[ferredoxin] + 2 S-adenosyl-L-methionine = 2-methyladenosine(2503) in 23S rRNA + 5'-deoxyadenosine + L-methionine + 2 oxidized [2Fe-2S]-[ferredoxin] + S-adenosyl-L-homocysteine</text>
        <dbReference type="Rhea" id="RHEA:42916"/>
        <dbReference type="Rhea" id="RHEA-COMP:10000"/>
        <dbReference type="Rhea" id="RHEA-COMP:10001"/>
        <dbReference type="Rhea" id="RHEA-COMP:10152"/>
        <dbReference type="Rhea" id="RHEA-COMP:10282"/>
        <dbReference type="ChEBI" id="CHEBI:17319"/>
        <dbReference type="ChEBI" id="CHEBI:33737"/>
        <dbReference type="ChEBI" id="CHEBI:33738"/>
        <dbReference type="ChEBI" id="CHEBI:57844"/>
        <dbReference type="ChEBI" id="CHEBI:57856"/>
        <dbReference type="ChEBI" id="CHEBI:59789"/>
        <dbReference type="ChEBI" id="CHEBI:74411"/>
        <dbReference type="ChEBI" id="CHEBI:74497"/>
        <dbReference type="EC" id="2.1.1.192"/>
    </reaction>
</comment>
<comment type="catalytic activity">
    <reaction evidence="1">
        <text>adenosine(37) in tRNA + 2 reduced [2Fe-2S]-[ferredoxin] + 2 S-adenosyl-L-methionine = 2-methyladenosine(37) in tRNA + 5'-deoxyadenosine + L-methionine + 2 oxidized [2Fe-2S]-[ferredoxin] + S-adenosyl-L-homocysteine</text>
        <dbReference type="Rhea" id="RHEA:43332"/>
        <dbReference type="Rhea" id="RHEA-COMP:10000"/>
        <dbReference type="Rhea" id="RHEA-COMP:10001"/>
        <dbReference type="Rhea" id="RHEA-COMP:10162"/>
        <dbReference type="Rhea" id="RHEA-COMP:10485"/>
        <dbReference type="ChEBI" id="CHEBI:17319"/>
        <dbReference type="ChEBI" id="CHEBI:33737"/>
        <dbReference type="ChEBI" id="CHEBI:33738"/>
        <dbReference type="ChEBI" id="CHEBI:57844"/>
        <dbReference type="ChEBI" id="CHEBI:57856"/>
        <dbReference type="ChEBI" id="CHEBI:59789"/>
        <dbReference type="ChEBI" id="CHEBI:74411"/>
        <dbReference type="ChEBI" id="CHEBI:74497"/>
        <dbReference type="EC" id="2.1.1.192"/>
    </reaction>
</comment>
<comment type="cofactor">
    <cofactor evidence="1">
        <name>[4Fe-4S] cluster</name>
        <dbReference type="ChEBI" id="CHEBI:49883"/>
    </cofactor>
    <text evidence="1">Binds 1 [4Fe-4S] cluster. The cluster is coordinated with 3 cysteines and an exchangeable S-adenosyl-L-methionine.</text>
</comment>
<comment type="subcellular location">
    <subcellularLocation>
        <location evidence="1">Cytoplasm</location>
    </subcellularLocation>
</comment>
<comment type="miscellaneous">
    <text evidence="1">Reaction proceeds by a ping-pong mechanism involving intermediate methylation of a conserved cysteine residue.</text>
</comment>
<comment type="similarity">
    <text evidence="1">Belongs to the radical SAM superfamily. RlmN family.</text>
</comment>
<gene>
    <name evidence="1" type="primary">rlmN</name>
    <name type="ordered locus">Dde_2967</name>
</gene>
<sequence>MVDILNLTFEELETFLVEKLGEKKFRARQIWQWLWNKYVRDFDQMTNVSKQTRAQLKEHARIFWPEVVTTSKSQDGTTKFLLRLADGALVETVLIPGSQGRITQCLSCQVGCAMGCTFCATGTLGFERNMTMSEILGQVLVAREYLNDVAERPILRNLVFMGMGEPLLNLDEIMRSLHTLNSELGLQFSPRRITVSTCGVNPEGLRRLGESGLAYLAVSLHAPTQELRRTIMPKAARWELNDFIEALQSYPLKTRERITFEYLLLGGVNDSLEHAKQLVRLVSRTKAKLNLIVYNPSGDEADPYAAPTEERILAFEQYLWSKHVTAIIRKSKGADIKAACGQLKAAETGGTPCCAQND</sequence>
<organism>
    <name type="scientific">Oleidesulfovibrio alaskensis (strain ATCC BAA-1058 / DSM 17464 / G20)</name>
    <name type="common">Desulfovibrio alaskensis</name>
    <dbReference type="NCBI Taxonomy" id="207559"/>
    <lineage>
        <taxon>Bacteria</taxon>
        <taxon>Pseudomonadati</taxon>
        <taxon>Thermodesulfobacteriota</taxon>
        <taxon>Desulfovibrionia</taxon>
        <taxon>Desulfovibrionales</taxon>
        <taxon>Desulfovibrionaceae</taxon>
        <taxon>Oleidesulfovibrio</taxon>
    </lineage>
</organism>
<accession>Q30X35</accession>
<evidence type="ECO:0000255" key="1">
    <source>
        <dbReference type="HAMAP-Rule" id="MF_01849"/>
    </source>
</evidence>
<evidence type="ECO:0000255" key="2">
    <source>
        <dbReference type="PROSITE-ProRule" id="PRU01266"/>
    </source>
</evidence>
<keyword id="KW-0004">4Fe-4S</keyword>
<keyword id="KW-0963">Cytoplasm</keyword>
<keyword id="KW-1015">Disulfide bond</keyword>
<keyword id="KW-0408">Iron</keyword>
<keyword id="KW-0411">Iron-sulfur</keyword>
<keyword id="KW-0479">Metal-binding</keyword>
<keyword id="KW-0489">Methyltransferase</keyword>
<keyword id="KW-1185">Reference proteome</keyword>
<keyword id="KW-0698">rRNA processing</keyword>
<keyword id="KW-0949">S-adenosyl-L-methionine</keyword>
<keyword id="KW-0808">Transferase</keyword>
<keyword id="KW-0819">tRNA processing</keyword>
<feature type="chain" id="PRO_0000350154" description="Dual-specificity RNA methyltransferase RlmN">
    <location>
        <begin position="1"/>
        <end position="358"/>
    </location>
</feature>
<feature type="domain" description="Radical SAM core" evidence="2">
    <location>
        <begin position="98"/>
        <end position="335"/>
    </location>
</feature>
<feature type="active site" description="Proton acceptor" evidence="1">
    <location>
        <position position="91"/>
    </location>
</feature>
<feature type="active site" description="S-methylcysteine intermediate" evidence="1">
    <location>
        <position position="340"/>
    </location>
</feature>
<feature type="binding site" evidence="1">
    <location>
        <position position="112"/>
    </location>
    <ligand>
        <name>[4Fe-4S] cluster</name>
        <dbReference type="ChEBI" id="CHEBI:49883"/>
        <note>4Fe-4S-S-AdoMet</note>
    </ligand>
</feature>
<feature type="binding site" evidence="1">
    <location>
        <position position="116"/>
    </location>
    <ligand>
        <name>[4Fe-4S] cluster</name>
        <dbReference type="ChEBI" id="CHEBI:49883"/>
        <note>4Fe-4S-S-AdoMet</note>
    </ligand>
</feature>
<feature type="binding site" evidence="1">
    <location>
        <position position="119"/>
    </location>
    <ligand>
        <name>[4Fe-4S] cluster</name>
        <dbReference type="ChEBI" id="CHEBI:49883"/>
        <note>4Fe-4S-S-AdoMet</note>
    </ligand>
</feature>
<feature type="binding site" evidence="1">
    <location>
        <begin position="164"/>
        <end position="165"/>
    </location>
    <ligand>
        <name>S-adenosyl-L-methionine</name>
        <dbReference type="ChEBI" id="CHEBI:59789"/>
    </ligand>
</feature>
<feature type="binding site" evidence="1">
    <location>
        <position position="196"/>
    </location>
    <ligand>
        <name>S-adenosyl-L-methionine</name>
        <dbReference type="ChEBI" id="CHEBI:59789"/>
    </ligand>
</feature>
<feature type="binding site" evidence="1">
    <location>
        <begin position="219"/>
        <end position="221"/>
    </location>
    <ligand>
        <name>S-adenosyl-L-methionine</name>
        <dbReference type="ChEBI" id="CHEBI:59789"/>
    </ligand>
</feature>
<feature type="binding site" evidence="1">
    <location>
        <position position="295"/>
    </location>
    <ligand>
        <name>S-adenosyl-L-methionine</name>
        <dbReference type="ChEBI" id="CHEBI:59789"/>
    </ligand>
</feature>
<feature type="disulfide bond" description="(transient)" evidence="1">
    <location>
        <begin position="105"/>
        <end position="340"/>
    </location>
</feature>
<dbReference type="EC" id="2.1.1.192" evidence="1"/>
<dbReference type="EMBL" id="CP000112">
    <property type="protein sequence ID" value="ABB39761.1"/>
    <property type="molecule type" value="Genomic_DNA"/>
</dbReference>
<dbReference type="RefSeq" id="WP_011368739.1">
    <property type="nucleotide sequence ID" value="NC_007519.1"/>
</dbReference>
<dbReference type="SMR" id="Q30X35"/>
<dbReference type="STRING" id="207559.Dde_2967"/>
<dbReference type="KEGG" id="dde:Dde_2967"/>
<dbReference type="eggNOG" id="COG0820">
    <property type="taxonomic scope" value="Bacteria"/>
</dbReference>
<dbReference type="HOGENOM" id="CLU_029101_2_0_7"/>
<dbReference type="Proteomes" id="UP000002710">
    <property type="component" value="Chromosome"/>
</dbReference>
<dbReference type="GO" id="GO:0005737">
    <property type="term" value="C:cytoplasm"/>
    <property type="evidence" value="ECO:0007669"/>
    <property type="project" value="UniProtKB-SubCell"/>
</dbReference>
<dbReference type="GO" id="GO:0051539">
    <property type="term" value="F:4 iron, 4 sulfur cluster binding"/>
    <property type="evidence" value="ECO:0007669"/>
    <property type="project" value="UniProtKB-UniRule"/>
</dbReference>
<dbReference type="GO" id="GO:0046872">
    <property type="term" value="F:metal ion binding"/>
    <property type="evidence" value="ECO:0007669"/>
    <property type="project" value="UniProtKB-KW"/>
</dbReference>
<dbReference type="GO" id="GO:0070040">
    <property type="term" value="F:rRNA (adenine(2503)-C2-)-methyltransferase activity"/>
    <property type="evidence" value="ECO:0007669"/>
    <property type="project" value="UniProtKB-UniRule"/>
</dbReference>
<dbReference type="GO" id="GO:0019843">
    <property type="term" value="F:rRNA binding"/>
    <property type="evidence" value="ECO:0007669"/>
    <property type="project" value="UniProtKB-UniRule"/>
</dbReference>
<dbReference type="GO" id="GO:0002935">
    <property type="term" value="F:tRNA (adenine(37)-C2)-methyltransferase activity"/>
    <property type="evidence" value="ECO:0007669"/>
    <property type="project" value="UniProtKB-UniRule"/>
</dbReference>
<dbReference type="GO" id="GO:0000049">
    <property type="term" value="F:tRNA binding"/>
    <property type="evidence" value="ECO:0007669"/>
    <property type="project" value="UniProtKB-UniRule"/>
</dbReference>
<dbReference type="GO" id="GO:0070475">
    <property type="term" value="P:rRNA base methylation"/>
    <property type="evidence" value="ECO:0007669"/>
    <property type="project" value="UniProtKB-UniRule"/>
</dbReference>
<dbReference type="GO" id="GO:0030488">
    <property type="term" value="P:tRNA methylation"/>
    <property type="evidence" value="ECO:0007669"/>
    <property type="project" value="UniProtKB-UniRule"/>
</dbReference>
<dbReference type="CDD" id="cd01335">
    <property type="entry name" value="Radical_SAM"/>
    <property type="match status" value="1"/>
</dbReference>
<dbReference type="FunFam" id="3.20.20.70:FF:000014">
    <property type="entry name" value="Probable dual-specificity RNA methyltransferase RlmN"/>
    <property type="match status" value="1"/>
</dbReference>
<dbReference type="Gene3D" id="1.10.150.530">
    <property type="match status" value="1"/>
</dbReference>
<dbReference type="Gene3D" id="3.20.20.70">
    <property type="entry name" value="Aldolase class I"/>
    <property type="match status" value="1"/>
</dbReference>
<dbReference type="HAMAP" id="MF_01849">
    <property type="entry name" value="RNA_methyltr_RlmN"/>
    <property type="match status" value="1"/>
</dbReference>
<dbReference type="InterPro" id="IPR013785">
    <property type="entry name" value="Aldolase_TIM"/>
</dbReference>
<dbReference type="InterPro" id="IPR040072">
    <property type="entry name" value="Methyltransferase_A"/>
</dbReference>
<dbReference type="InterPro" id="IPR048641">
    <property type="entry name" value="RlmN_N"/>
</dbReference>
<dbReference type="InterPro" id="IPR027492">
    <property type="entry name" value="RNA_MTrfase_RlmN"/>
</dbReference>
<dbReference type="InterPro" id="IPR004383">
    <property type="entry name" value="rRNA_lsu_MTrfase_RlmN/Cfr"/>
</dbReference>
<dbReference type="InterPro" id="IPR007197">
    <property type="entry name" value="rSAM"/>
</dbReference>
<dbReference type="NCBIfam" id="TIGR00048">
    <property type="entry name" value="rRNA_mod_RlmN"/>
    <property type="match status" value="1"/>
</dbReference>
<dbReference type="PANTHER" id="PTHR30544">
    <property type="entry name" value="23S RRNA METHYLTRANSFERASE"/>
    <property type="match status" value="1"/>
</dbReference>
<dbReference type="PANTHER" id="PTHR30544:SF5">
    <property type="entry name" value="RADICAL SAM CORE DOMAIN-CONTAINING PROTEIN"/>
    <property type="match status" value="1"/>
</dbReference>
<dbReference type="Pfam" id="PF04055">
    <property type="entry name" value="Radical_SAM"/>
    <property type="match status" value="1"/>
</dbReference>
<dbReference type="Pfam" id="PF21016">
    <property type="entry name" value="RlmN_N"/>
    <property type="match status" value="1"/>
</dbReference>
<dbReference type="PIRSF" id="PIRSF006004">
    <property type="entry name" value="CHP00048"/>
    <property type="match status" value="1"/>
</dbReference>
<dbReference type="SFLD" id="SFLDF00275">
    <property type="entry name" value="adenosine_C2_methyltransferase"/>
    <property type="match status" value="1"/>
</dbReference>
<dbReference type="SFLD" id="SFLDS00029">
    <property type="entry name" value="Radical_SAM"/>
    <property type="match status" value="1"/>
</dbReference>
<dbReference type="SUPFAM" id="SSF102114">
    <property type="entry name" value="Radical SAM enzymes"/>
    <property type="match status" value="1"/>
</dbReference>
<dbReference type="PROSITE" id="PS51918">
    <property type="entry name" value="RADICAL_SAM"/>
    <property type="match status" value="1"/>
</dbReference>
<proteinExistence type="inferred from homology"/>
<reference key="1">
    <citation type="journal article" date="2011" name="J. Bacteriol.">
        <title>Complete genome sequence and updated annotation of Desulfovibrio alaskensis G20.</title>
        <authorList>
            <person name="Hauser L.J."/>
            <person name="Land M.L."/>
            <person name="Brown S.D."/>
            <person name="Larimer F."/>
            <person name="Keller K.L."/>
            <person name="Rapp-Giles B.J."/>
            <person name="Price M.N."/>
            <person name="Lin M."/>
            <person name="Bruce D.C."/>
            <person name="Detter J.C."/>
            <person name="Tapia R."/>
            <person name="Han C.S."/>
            <person name="Goodwin L.A."/>
            <person name="Cheng J.F."/>
            <person name="Pitluck S."/>
            <person name="Copeland A."/>
            <person name="Lucas S."/>
            <person name="Nolan M."/>
            <person name="Lapidus A.L."/>
            <person name="Palumbo A.V."/>
            <person name="Wall J.D."/>
        </authorList>
    </citation>
    <scope>NUCLEOTIDE SEQUENCE [LARGE SCALE GENOMIC DNA]</scope>
    <source>
        <strain>ATCC BAA-1058 / DSM 17464 / G20</strain>
    </source>
</reference>
<protein>
    <recommendedName>
        <fullName evidence="1">Dual-specificity RNA methyltransferase RlmN</fullName>
        <ecNumber evidence="1">2.1.1.192</ecNumber>
    </recommendedName>
    <alternativeName>
        <fullName evidence="1">23S rRNA (adenine(2503)-C(2))-methyltransferase</fullName>
    </alternativeName>
    <alternativeName>
        <fullName evidence="1">23S rRNA m2A2503 methyltransferase</fullName>
    </alternativeName>
    <alternativeName>
        <fullName evidence="1">Ribosomal RNA large subunit methyltransferase N</fullName>
    </alternativeName>
    <alternativeName>
        <fullName evidence="1">tRNA (adenine(37)-C(2))-methyltransferase</fullName>
    </alternativeName>
    <alternativeName>
        <fullName evidence="1">tRNA m2A37 methyltransferase</fullName>
    </alternativeName>
</protein>
<name>RLMN_OLEA2</name>